<sequence length="173" mass="18747">MAIILGIDPGSRVTGYGVIRQVGRQLSYLGSGCIRTKVDDLPSRLKLIYAGVTEIITQFQPDYFAIEQVFMAKNADSALKLGQARGVAIVAAVNQELPVFEYAARQVKQTVVGIGSAEKSQVQHMVRTLLKLPANPQADAADALAIAITHCHVSQNAMQMSESRLNLARGRLR</sequence>
<organism>
    <name type="scientific">Escherichia coli (strain K12 / MC4100 / BW2952)</name>
    <dbReference type="NCBI Taxonomy" id="595496"/>
    <lineage>
        <taxon>Bacteria</taxon>
        <taxon>Pseudomonadati</taxon>
        <taxon>Pseudomonadota</taxon>
        <taxon>Gammaproteobacteria</taxon>
        <taxon>Enterobacterales</taxon>
        <taxon>Enterobacteriaceae</taxon>
        <taxon>Escherichia</taxon>
    </lineage>
</organism>
<accession>C4ZQE7</accession>
<name>RUVC_ECOBW</name>
<proteinExistence type="inferred from homology"/>
<keyword id="KW-0963">Cytoplasm</keyword>
<keyword id="KW-0227">DNA damage</keyword>
<keyword id="KW-0233">DNA recombination</keyword>
<keyword id="KW-0234">DNA repair</keyword>
<keyword id="KW-0238">DNA-binding</keyword>
<keyword id="KW-0255">Endonuclease</keyword>
<keyword id="KW-0378">Hydrolase</keyword>
<keyword id="KW-0460">Magnesium</keyword>
<keyword id="KW-0479">Metal-binding</keyword>
<keyword id="KW-0540">Nuclease</keyword>
<gene>
    <name evidence="1" type="primary">ruvC</name>
    <name type="ordered locus">BWG_1677</name>
</gene>
<comment type="function">
    <text evidence="1">The RuvA-RuvB-RuvC complex processes Holliday junction (HJ) DNA during genetic recombination and DNA repair. Endonuclease that resolves HJ intermediates. Cleaves cruciform DNA by making single-stranded nicks across the HJ at symmetrical positions within the homologous arms, yielding a 5'-phosphate and a 3'-hydroxyl group; requires a central core of homology in the junction. The consensus cleavage sequence is 5'-(A/T)TT(C/G)-3'. Cleavage occurs on the 3'-side of the TT dinucleotide at the point of strand exchange. HJ branch migration catalyzed by RuvA-RuvB allows RuvC to scan DNA until it finds its consensus sequence, where it cleaves and resolves the cruciform DNA.</text>
</comment>
<comment type="catalytic activity">
    <reaction evidence="1">
        <text>Endonucleolytic cleavage at a junction such as a reciprocal single-stranded crossover between two homologous DNA duplexes (Holliday junction).</text>
        <dbReference type="EC" id="3.1.21.10"/>
    </reaction>
</comment>
<comment type="cofactor">
    <cofactor evidence="1">
        <name>Mg(2+)</name>
        <dbReference type="ChEBI" id="CHEBI:18420"/>
    </cofactor>
    <text evidence="1">Binds 2 Mg(2+) ion per subunit.</text>
</comment>
<comment type="subunit">
    <text evidence="1">Homodimer which binds Holliday junction (HJ) DNA. The HJ becomes 2-fold symmetrical on binding to RuvC with unstacked arms; it has a different conformation from HJ DNA in complex with RuvA. In the full resolvosome a probable DNA-RuvA(4)-RuvB(12)-RuvC(2) complex forms which resolves the HJ.</text>
</comment>
<comment type="subcellular location">
    <subcellularLocation>
        <location evidence="1">Cytoplasm</location>
    </subcellularLocation>
</comment>
<comment type="similarity">
    <text evidence="1">Belongs to the RuvC family.</text>
</comment>
<protein>
    <recommendedName>
        <fullName evidence="1">Crossover junction endodeoxyribonuclease RuvC</fullName>
        <ecNumber evidence="1">3.1.21.10</ecNumber>
    </recommendedName>
    <alternativeName>
        <fullName evidence="1">Holliday junction nuclease RuvC</fullName>
    </alternativeName>
    <alternativeName>
        <fullName evidence="1">Holliday junction resolvase RuvC</fullName>
    </alternativeName>
</protein>
<reference key="1">
    <citation type="journal article" date="2009" name="J. Bacteriol.">
        <title>Genomic sequencing reveals regulatory mutations and recombinational events in the widely used MC4100 lineage of Escherichia coli K-12.</title>
        <authorList>
            <person name="Ferenci T."/>
            <person name="Zhou Z."/>
            <person name="Betteridge T."/>
            <person name="Ren Y."/>
            <person name="Liu Y."/>
            <person name="Feng L."/>
            <person name="Reeves P.R."/>
            <person name="Wang L."/>
        </authorList>
    </citation>
    <scope>NUCLEOTIDE SEQUENCE [LARGE SCALE GENOMIC DNA]</scope>
    <source>
        <strain>K12 / MC4100 / BW2952</strain>
    </source>
</reference>
<evidence type="ECO:0000255" key="1">
    <source>
        <dbReference type="HAMAP-Rule" id="MF_00034"/>
    </source>
</evidence>
<feature type="chain" id="PRO_1000202034" description="Crossover junction endodeoxyribonuclease RuvC">
    <location>
        <begin position="1"/>
        <end position="173"/>
    </location>
</feature>
<feature type="active site" evidence="1">
    <location>
        <position position="8"/>
    </location>
</feature>
<feature type="active site" evidence="1">
    <location>
        <position position="67"/>
    </location>
</feature>
<feature type="active site" evidence="1">
    <location>
        <position position="139"/>
    </location>
</feature>
<feature type="binding site" evidence="1">
    <location>
        <position position="8"/>
    </location>
    <ligand>
        <name>Mg(2+)</name>
        <dbReference type="ChEBI" id="CHEBI:18420"/>
        <label>1</label>
    </ligand>
</feature>
<feature type="binding site" evidence="1">
    <location>
        <position position="67"/>
    </location>
    <ligand>
        <name>Mg(2+)</name>
        <dbReference type="ChEBI" id="CHEBI:18420"/>
        <label>2</label>
    </ligand>
</feature>
<feature type="binding site" evidence="1">
    <location>
        <position position="139"/>
    </location>
    <ligand>
        <name>Mg(2+)</name>
        <dbReference type="ChEBI" id="CHEBI:18420"/>
        <label>1</label>
    </ligand>
</feature>
<dbReference type="EC" id="3.1.21.10" evidence="1"/>
<dbReference type="EMBL" id="CP001396">
    <property type="protein sequence ID" value="ACR62166.1"/>
    <property type="molecule type" value="Genomic_DNA"/>
</dbReference>
<dbReference type="RefSeq" id="WP_001295503.1">
    <property type="nucleotide sequence ID" value="NC_012759.1"/>
</dbReference>
<dbReference type="SMR" id="C4ZQE7"/>
<dbReference type="GeneID" id="89516631"/>
<dbReference type="KEGG" id="ebw:BWG_1677"/>
<dbReference type="HOGENOM" id="CLU_091257_2_1_6"/>
<dbReference type="GO" id="GO:0005737">
    <property type="term" value="C:cytoplasm"/>
    <property type="evidence" value="ECO:0007669"/>
    <property type="project" value="UniProtKB-SubCell"/>
</dbReference>
<dbReference type="GO" id="GO:0048476">
    <property type="term" value="C:Holliday junction resolvase complex"/>
    <property type="evidence" value="ECO:0007669"/>
    <property type="project" value="UniProtKB-UniRule"/>
</dbReference>
<dbReference type="GO" id="GO:0008821">
    <property type="term" value="F:crossover junction DNA endonuclease activity"/>
    <property type="evidence" value="ECO:0007669"/>
    <property type="project" value="UniProtKB-UniRule"/>
</dbReference>
<dbReference type="GO" id="GO:0003677">
    <property type="term" value="F:DNA binding"/>
    <property type="evidence" value="ECO:0007669"/>
    <property type="project" value="UniProtKB-KW"/>
</dbReference>
<dbReference type="GO" id="GO:0000287">
    <property type="term" value="F:magnesium ion binding"/>
    <property type="evidence" value="ECO:0007669"/>
    <property type="project" value="UniProtKB-UniRule"/>
</dbReference>
<dbReference type="GO" id="GO:0006310">
    <property type="term" value="P:DNA recombination"/>
    <property type="evidence" value="ECO:0007669"/>
    <property type="project" value="UniProtKB-UniRule"/>
</dbReference>
<dbReference type="GO" id="GO:0006281">
    <property type="term" value="P:DNA repair"/>
    <property type="evidence" value="ECO:0007669"/>
    <property type="project" value="UniProtKB-UniRule"/>
</dbReference>
<dbReference type="CDD" id="cd16962">
    <property type="entry name" value="RuvC"/>
    <property type="match status" value="1"/>
</dbReference>
<dbReference type="FunFam" id="3.30.420.10:FF:000002">
    <property type="entry name" value="Crossover junction endodeoxyribonuclease RuvC"/>
    <property type="match status" value="1"/>
</dbReference>
<dbReference type="Gene3D" id="3.30.420.10">
    <property type="entry name" value="Ribonuclease H-like superfamily/Ribonuclease H"/>
    <property type="match status" value="1"/>
</dbReference>
<dbReference type="HAMAP" id="MF_00034">
    <property type="entry name" value="RuvC"/>
    <property type="match status" value="1"/>
</dbReference>
<dbReference type="InterPro" id="IPR012337">
    <property type="entry name" value="RNaseH-like_sf"/>
</dbReference>
<dbReference type="InterPro" id="IPR036397">
    <property type="entry name" value="RNaseH_sf"/>
</dbReference>
<dbReference type="InterPro" id="IPR020563">
    <property type="entry name" value="X-over_junc_endoDNase_Mg_BS"/>
</dbReference>
<dbReference type="InterPro" id="IPR002176">
    <property type="entry name" value="X-over_junc_endoDNase_RuvC"/>
</dbReference>
<dbReference type="NCBIfam" id="NF000711">
    <property type="entry name" value="PRK00039.2-1"/>
    <property type="match status" value="1"/>
</dbReference>
<dbReference type="NCBIfam" id="TIGR00228">
    <property type="entry name" value="ruvC"/>
    <property type="match status" value="1"/>
</dbReference>
<dbReference type="PANTHER" id="PTHR30194">
    <property type="entry name" value="CROSSOVER JUNCTION ENDODEOXYRIBONUCLEASE RUVC"/>
    <property type="match status" value="1"/>
</dbReference>
<dbReference type="PANTHER" id="PTHR30194:SF3">
    <property type="entry name" value="CROSSOVER JUNCTION ENDODEOXYRIBONUCLEASE RUVC"/>
    <property type="match status" value="1"/>
</dbReference>
<dbReference type="Pfam" id="PF02075">
    <property type="entry name" value="RuvC"/>
    <property type="match status" value="1"/>
</dbReference>
<dbReference type="PRINTS" id="PR00696">
    <property type="entry name" value="RSOLVASERUVC"/>
</dbReference>
<dbReference type="SUPFAM" id="SSF53098">
    <property type="entry name" value="Ribonuclease H-like"/>
    <property type="match status" value="1"/>
</dbReference>
<dbReference type="PROSITE" id="PS01321">
    <property type="entry name" value="RUVC"/>
    <property type="match status" value="1"/>
</dbReference>